<proteinExistence type="inferred from homology"/>
<sequence length="119" mass="12753">MIYWILLALAIVSEITGTLALKWASVGGGHAGFILMLVMISLSYILLSFSVKRIALGVAYALWEGVGIVLITLFSVLLFNETLTVQKALGLLVLIAGILLIKTGTRTVSRKAEVRHVAG</sequence>
<feature type="chain" id="PRO_0000331164" description="Spermidine export protein MdtJ">
    <location>
        <begin position="1"/>
        <end position="119"/>
    </location>
</feature>
<feature type="transmembrane region" description="Helical" evidence="2">
    <location>
        <begin position="1"/>
        <end position="21"/>
    </location>
</feature>
<feature type="transmembrane region" description="Helical" evidence="2">
    <location>
        <begin position="31"/>
        <end position="51"/>
    </location>
</feature>
<feature type="transmembrane region" description="Helical" evidence="2">
    <location>
        <begin position="54"/>
        <end position="74"/>
    </location>
</feature>
<feature type="transmembrane region" description="Helical" evidence="2">
    <location>
        <begin position="81"/>
        <end position="101"/>
    </location>
</feature>
<name>MDTJ_CROS8</name>
<comment type="function">
    <text evidence="1">Catalyzes the excretion of spermidine.</text>
</comment>
<comment type="subunit">
    <text evidence="1">Forms a complex with MdtI.</text>
</comment>
<comment type="subcellular location">
    <subcellularLocation>
        <location evidence="1">Cell inner membrane</location>
        <topology evidence="1">Multi-pass membrane protein</topology>
    </subcellularLocation>
</comment>
<comment type="similarity">
    <text evidence="3">Belongs to the drug/metabolite transporter (DMT) superfamily. Small multidrug resistance (SMR) (TC 2.A.7.1) family. MdtJ subfamily.</text>
</comment>
<keyword id="KW-0997">Cell inner membrane</keyword>
<keyword id="KW-1003">Cell membrane</keyword>
<keyword id="KW-0472">Membrane</keyword>
<keyword id="KW-1185">Reference proteome</keyword>
<keyword id="KW-0812">Transmembrane</keyword>
<keyword id="KW-1133">Transmembrane helix</keyword>
<keyword id="KW-0813">Transport</keyword>
<accession>A7MEJ4</accession>
<evidence type="ECO:0000250" key="1"/>
<evidence type="ECO:0000255" key="2"/>
<evidence type="ECO:0000255" key="3">
    <source>
        <dbReference type="HAMAP-Rule" id="MF_01598"/>
    </source>
</evidence>
<dbReference type="EMBL" id="CP000783">
    <property type="protein sequence ID" value="ABU76983.1"/>
    <property type="molecule type" value="Genomic_DNA"/>
</dbReference>
<dbReference type="RefSeq" id="WP_007868015.1">
    <property type="nucleotide sequence ID" value="NC_009778.1"/>
</dbReference>
<dbReference type="SMR" id="A7MEJ4"/>
<dbReference type="GeneID" id="56730551"/>
<dbReference type="KEGG" id="esa:ESA_01729"/>
<dbReference type="HOGENOM" id="CLU_133067_0_0_6"/>
<dbReference type="Proteomes" id="UP000000260">
    <property type="component" value="Chromosome"/>
</dbReference>
<dbReference type="GO" id="GO:0005886">
    <property type="term" value="C:plasma membrane"/>
    <property type="evidence" value="ECO:0007669"/>
    <property type="project" value="UniProtKB-SubCell"/>
</dbReference>
<dbReference type="GO" id="GO:0015199">
    <property type="term" value="F:amino-acid betaine transmembrane transporter activity"/>
    <property type="evidence" value="ECO:0007669"/>
    <property type="project" value="TreeGrafter"/>
</dbReference>
<dbReference type="GO" id="GO:0015297">
    <property type="term" value="F:antiporter activity"/>
    <property type="evidence" value="ECO:0007669"/>
    <property type="project" value="TreeGrafter"/>
</dbReference>
<dbReference type="GO" id="GO:0015220">
    <property type="term" value="F:choline transmembrane transporter activity"/>
    <property type="evidence" value="ECO:0007669"/>
    <property type="project" value="TreeGrafter"/>
</dbReference>
<dbReference type="GO" id="GO:0031460">
    <property type="term" value="P:glycine betaine transport"/>
    <property type="evidence" value="ECO:0007669"/>
    <property type="project" value="TreeGrafter"/>
</dbReference>
<dbReference type="GO" id="GO:1903711">
    <property type="term" value="P:spermidine transmembrane transport"/>
    <property type="evidence" value="ECO:0007669"/>
    <property type="project" value="TreeGrafter"/>
</dbReference>
<dbReference type="Gene3D" id="1.10.3730.20">
    <property type="match status" value="1"/>
</dbReference>
<dbReference type="InterPro" id="IPR000390">
    <property type="entry name" value="Small_drug/metabolite_transptr"/>
</dbReference>
<dbReference type="InterPro" id="IPR045324">
    <property type="entry name" value="Small_multidrug_res"/>
</dbReference>
<dbReference type="NCBIfam" id="NF007767">
    <property type="entry name" value="PRK10452.1"/>
    <property type="match status" value="1"/>
</dbReference>
<dbReference type="PANTHER" id="PTHR30561">
    <property type="entry name" value="SMR FAMILY PROTON-DEPENDENT DRUG EFFLUX TRANSPORTER SUGE"/>
    <property type="match status" value="1"/>
</dbReference>
<dbReference type="PANTHER" id="PTHR30561:SF2">
    <property type="entry name" value="SPERMIDINE EXPORT PROTEIN MDTJ"/>
    <property type="match status" value="1"/>
</dbReference>
<dbReference type="Pfam" id="PF00893">
    <property type="entry name" value="Multi_Drug_Res"/>
    <property type="match status" value="1"/>
</dbReference>
<dbReference type="SUPFAM" id="SSF103481">
    <property type="entry name" value="Multidrug resistance efflux transporter EmrE"/>
    <property type="match status" value="1"/>
</dbReference>
<reference key="1">
    <citation type="journal article" date="2010" name="PLoS ONE">
        <title>Genome sequence of Cronobacter sakazakii BAA-894 and comparative genomic hybridization analysis with other Cronobacter species.</title>
        <authorList>
            <person name="Kucerova E."/>
            <person name="Clifton S.W."/>
            <person name="Xia X.Q."/>
            <person name="Long F."/>
            <person name="Porwollik S."/>
            <person name="Fulton L."/>
            <person name="Fronick C."/>
            <person name="Minx P."/>
            <person name="Kyung K."/>
            <person name="Warren W."/>
            <person name="Fulton R."/>
            <person name="Feng D."/>
            <person name="Wollam A."/>
            <person name="Shah N."/>
            <person name="Bhonagiri V."/>
            <person name="Nash W.E."/>
            <person name="Hallsworth-Pepin K."/>
            <person name="Wilson R.K."/>
            <person name="McClelland M."/>
            <person name="Forsythe S.J."/>
        </authorList>
    </citation>
    <scope>NUCLEOTIDE SEQUENCE [LARGE SCALE GENOMIC DNA]</scope>
    <source>
        <strain>ATCC BAA-894</strain>
    </source>
</reference>
<gene>
    <name type="primary">mdtJ</name>
    <name type="ordered locus">ESA_01729</name>
</gene>
<organism>
    <name type="scientific">Cronobacter sakazakii (strain ATCC BAA-894)</name>
    <name type="common">Enterobacter sakazakii</name>
    <dbReference type="NCBI Taxonomy" id="290339"/>
    <lineage>
        <taxon>Bacteria</taxon>
        <taxon>Pseudomonadati</taxon>
        <taxon>Pseudomonadota</taxon>
        <taxon>Gammaproteobacteria</taxon>
        <taxon>Enterobacterales</taxon>
        <taxon>Enterobacteriaceae</taxon>
        <taxon>Cronobacter</taxon>
    </lineage>
</organism>
<protein>
    <recommendedName>
        <fullName>Spermidine export protein MdtJ</fullName>
    </recommendedName>
</protein>